<dbReference type="EMBL" id="Z49808">
    <property type="protein sequence ID" value="CAA89914.1"/>
    <property type="molecule type" value="Genomic_DNA"/>
</dbReference>
<dbReference type="EMBL" id="AY557965">
    <property type="protein sequence ID" value="AAS56291.1"/>
    <property type="molecule type" value="Genomic_DNA"/>
</dbReference>
<dbReference type="EMBL" id="BK006946">
    <property type="protein sequence ID" value="DAA10078.1"/>
    <property type="molecule type" value="Genomic_DNA"/>
</dbReference>
<dbReference type="PIR" id="S55128">
    <property type="entry name" value="S55128"/>
</dbReference>
<dbReference type="RefSeq" id="NP_013906.1">
    <property type="nucleotide sequence ID" value="NM_001182687.1"/>
</dbReference>
<dbReference type="BioGRID" id="35359">
    <property type="interactions" value="63"/>
</dbReference>
<dbReference type="DIP" id="DIP-1405N"/>
<dbReference type="FunCoup" id="Q03231">
    <property type="interactions" value="87"/>
</dbReference>
<dbReference type="IntAct" id="Q03231">
    <property type="interactions" value="6"/>
</dbReference>
<dbReference type="MINT" id="Q03231"/>
<dbReference type="STRING" id="4932.YMR181C"/>
<dbReference type="iPTMnet" id="Q03231"/>
<dbReference type="PaxDb" id="4932-YMR181C"/>
<dbReference type="PeptideAtlas" id="Q03231"/>
<dbReference type="EnsemblFungi" id="YMR181C_mRNA">
    <property type="protein sequence ID" value="YMR181C"/>
    <property type="gene ID" value="YMR181C"/>
</dbReference>
<dbReference type="GeneID" id="855219"/>
<dbReference type="KEGG" id="sce:YMR181C"/>
<dbReference type="AGR" id="SGD:S000004793"/>
<dbReference type="SGD" id="S000004793">
    <property type="gene designation" value="YMR181C"/>
</dbReference>
<dbReference type="VEuPathDB" id="FungiDB:YMR181C"/>
<dbReference type="GeneTree" id="ENSGT00940000176712"/>
<dbReference type="HOGENOM" id="CLU_1705273_0_0_1"/>
<dbReference type="InParanoid" id="Q03231"/>
<dbReference type="OMA" id="YRNNICK"/>
<dbReference type="OrthoDB" id="4070040at2759"/>
<dbReference type="BioCyc" id="YEAST:G3O-32869-MONOMER"/>
<dbReference type="BioGRID-ORCS" id="855219">
    <property type="hits" value="1 hit in 10 CRISPR screens"/>
</dbReference>
<dbReference type="PRO" id="PR:Q03231"/>
<dbReference type="Proteomes" id="UP000002311">
    <property type="component" value="Chromosome XIII"/>
</dbReference>
<dbReference type="RNAct" id="Q03231">
    <property type="molecule type" value="protein"/>
</dbReference>
<comment type="miscellaneous">
    <text evidence="1">Present with 721 molecules/cell in log phase SD medium.</text>
</comment>
<comment type="similarity">
    <text evidence="2">To yeast YPL229w.</text>
</comment>
<name>YM46_YEAST</name>
<gene>
    <name type="ordered locus">YMR181C</name>
    <name type="ORF">YM8010.11C</name>
</gene>
<accession>Q03231</accession>
<accession>D6W004</accession>
<sequence>MTPLLQAEAKMNTSLYLTESIQQHEFNLTSPQSFYSSPSVPNSKNNSGIFSYNTANNSRVSSSDEFTTQQDGMNTIMYKNNISKTFEDDIFYCPRSLLTPEEQVVYQEIDKYYMEQALLTQLQISQTYSSTPKEEKIVKFNPYTSKSFSPASSE</sequence>
<protein>
    <recommendedName>
        <fullName>Uncharacterized protein YMR181C</fullName>
    </recommendedName>
</protein>
<evidence type="ECO:0000269" key="1">
    <source>
    </source>
</evidence>
<evidence type="ECO:0000305" key="2"/>
<evidence type="ECO:0007744" key="3">
    <source>
    </source>
</evidence>
<feature type="chain" id="PRO_0000203320" description="Uncharacterized protein YMR181C">
    <location>
        <begin position="1"/>
        <end position="154"/>
    </location>
</feature>
<feature type="modified residue" description="Phosphoserine" evidence="3">
    <location>
        <position position="47"/>
    </location>
</feature>
<proteinExistence type="evidence at protein level"/>
<keyword id="KW-0597">Phosphoprotein</keyword>
<keyword id="KW-1185">Reference proteome</keyword>
<organism>
    <name type="scientific">Saccharomyces cerevisiae (strain ATCC 204508 / S288c)</name>
    <name type="common">Baker's yeast</name>
    <dbReference type="NCBI Taxonomy" id="559292"/>
    <lineage>
        <taxon>Eukaryota</taxon>
        <taxon>Fungi</taxon>
        <taxon>Dikarya</taxon>
        <taxon>Ascomycota</taxon>
        <taxon>Saccharomycotina</taxon>
        <taxon>Saccharomycetes</taxon>
        <taxon>Saccharomycetales</taxon>
        <taxon>Saccharomycetaceae</taxon>
        <taxon>Saccharomyces</taxon>
    </lineage>
</organism>
<reference key="1">
    <citation type="journal article" date="1997" name="Nature">
        <title>The nucleotide sequence of Saccharomyces cerevisiae chromosome XIII.</title>
        <authorList>
            <person name="Bowman S."/>
            <person name="Churcher C.M."/>
            <person name="Badcock K."/>
            <person name="Brown D."/>
            <person name="Chillingworth T."/>
            <person name="Connor R."/>
            <person name="Dedman K."/>
            <person name="Devlin K."/>
            <person name="Gentles S."/>
            <person name="Hamlin N."/>
            <person name="Hunt S."/>
            <person name="Jagels K."/>
            <person name="Lye G."/>
            <person name="Moule S."/>
            <person name="Odell C."/>
            <person name="Pearson D."/>
            <person name="Rajandream M.A."/>
            <person name="Rice P."/>
            <person name="Skelton J."/>
            <person name="Walsh S.V."/>
            <person name="Whitehead S."/>
            <person name="Barrell B.G."/>
        </authorList>
    </citation>
    <scope>NUCLEOTIDE SEQUENCE [LARGE SCALE GENOMIC DNA]</scope>
    <source>
        <strain>ATCC 204508 / S288c</strain>
    </source>
</reference>
<reference key="2">
    <citation type="journal article" date="2014" name="G3 (Bethesda)">
        <title>The reference genome sequence of Saccharomyces cerevisiae: Then and now.</title>
        <authorList>
            <person name="Engel S.R."/>
            <person name="Dietrich F.S."/>
            <person name="Fisk D.G."/>
            <person name="Binkley G."/>
            <person name="Balakrishnan R."/>
            <person name="Costanzo M.C."/>
            <person name="Dwight S.S."/>
            <person name="Hitz B.C."/>
            <person name="Karra K."/>
            <person name="Nash R.S."/>
            <person name="Weng S."/>
            <person name="Wong E.D."/>
            <person name="Lloyd P."/>
            <person name="Skrzypek M.S."/>
            <person name="Miyasato S.R."/>
            <person name="Simison M."/>
            <person name="Cherry J.M."/>
        </authorList>
    </citation>
    <scope>GENOME REANNOTATION</scope>
    <source>
        <strain>ATCC 204508 / S288c</strain>
    </source>
</reference>
<reference key="3">
    <citation type="journal article" date="2007" name="Genome Res.">
        <title>Approaching a complete repository of sequence-verified protein-encoding clones for Saccharomyces cerevisiae.</title>
        <authorList>
            <person name="Hu Y."/>
            <person name="Rolfs A."/>
            <person name="Bhullar B."/>
            <person name="Murthy T.V.S."/>
            <person name="Zhu C."/>
            <person name="Berger M.F."/>
            <person name="Camargo A.A."/>
            <person name="Kelley F."/>
            <person name="McCarron S."/>
            <person name="Jepson D."/>
            <person name="Richardson A."/>
            <person name="Raphael J."/>
            <person name="Moreira D."/>
            <person name="Taycher E."/>
            <person name="Zuo D."/>
            <person name="Mohr S."/>
            <person name="Kane M.F."/>
            <person name="Williamson J."/>
            <person name="Simpson A.J.G."/>
            <person name="Bulyk M.L."/>
            <person name="Harlow E."/>
            <person name="Marsischky G."/>
            <person name="Kolodner R.D."/>
            <person name="LaBaer J."/>
        </authorList>
    </citation>
    <scope>NUCLEOTIDE SEQUENCE [GENOMIC DNA]</scope>
    <source>
        <strain>ATCC 204508 / S288c</strain>
    </source>
</reference>
<reference key="4">
    <citation type="journal article" date="2003" name="Nature">
        <title>Global analysis of protein expression in yeast.</title>
        <authorList>
            <person name="Ghaemmaghami S."/>
            <person name="Huh W.-K."/>
            <person name="Bower K."/>
            <person name="Howson R.W."/>
            <person name="Belle A."/>
            <person name="Dephoure N."/>
            <person name="O'Shea E.K."/>
            <person name="Weissman J.S."/>
        </authorList>
    </citation>
    <scope>LEVEL OF PROTEIN EXPRESSION [LARGE SCALE ANALYSIS]</scope>
</reference>
<reference key="5">
    <citation type="journal article" date="2008" name="Mol. Cell. Proteomics">
        <title>A multidimensional chromatography technology for in-depth phosphoproteome analysis.</title>
        <authorList>
            <person name="Albuquerque C.P."/>
            <person name="Smolka M.B."/>
            <person name="Payne S.H."/>
            <person name="Bafna V."/>
            <person name="Eng J."/>
            <person name="Zhou H."/>
        </authorList>
    </citation>
    <scope>PHOSPHORYLATION [LARGE SCALE ANALYSIS] AT SER-47</scope>
    <scope>IDENTIFICATION BY MASS SPECTROMETRY [LARGE SCALE ANALYSIS]</scope>
</reference>